<evidence type="ECO:0000250" key="1"/>
<evidence type="ECO:0000255" key="2"/>
<evidence type="ECO:0000256" key="3">
    <source>
        <dbReference type="SAM" id="MobiDB-lite"/>
    </source>
</evidence>
<evidence type="ECO:0000305" key="4"/>
<dbReference type="EMBL" id="AB010645">
    <property type="protein sequence ID" value="BAA31464.1"/>
    <property type="molecule type" value="Genomic_DNA"/>
</dbReference>
<dbReference type="SMR" id="O82860"/>
<dbReference type="UniPathway" id="UPA00694"/>
<dbReference type="GO" id="GO:0005886">
    <property type="term" value="C:plasma membrane"/>
    <property type="evidence" value="ECO:0007669"/>
    <property type="project" value="UniProtKB-SubCell"/>
</dbReference>
<dbReference type="GO" id="GO:0030244">
    <property type="term" value="P:cellulose biosynthetic process"/>
    <property type="evidence" value="ECO:0007669"/>
    <property type="project" value="UniProtKB-KW"/>
</dbReference>
<dbReference type="GO" id="GO:0006011">
    <property type="term" value="P:UDP-alpha-D-glucose metabolic process"/>
    <property type="evidence" value="ECO:0007669"/>
    <property type="project" value="InterPro"/>
</dbReference>
<dbReference type="Gene3D" id="2.60.120.260">
    <property type="entry name" value="Galactose-binding domain-like"/>
    <property type="match status" value="2"/>
</dbReference>
<dbReference type="InterPro" id="IPR003920">
    <property type="entry name" value="Cell_synth_B"/>
</dbReference>
<dbReference type="InterPro" id="IPR018513">
    <property type="entry name" value="Cell_synthase_bac"/>
</dbReference>
<dbReference type="PANTHER" id="PTHR39083">
    <property type="entry name" value="CYCLIC DI-GMP-BINDING PROTEIN"/>
    <property type="match status" value="1"/>
</dbReference>
<dbReference type="PANTHER" id="PTHR39083:SF1">
    <property type="entry name" value="CYCLIC DI-GMP-BINDING PROTEIN"/>
    <property type="match status" value="1"/>
</dbReference>
<dbReference type="Pfam" id="PF03170">
    <property type="entry name" value="BcsB"/>
    <property type="match status" value="1"/>
</dbReference>
<dbReference type="PRINTS" id="PR01440">
    <property type="entry name" value="CELLSNTHASEB"/>
</dbReference>
<protein>
    <recommendedName>
        <fullName>Cyclic di-GMP-binding protein</fullName>
    </recommendedName>
    <alternativeName>
        <fullName>CDGBP</fullName>
    </alternativeName>
    <alternativeName>
        <fullName>Cellulose synthase regulatory subunit</fullName>
        <shortName>Cellulose synthase protein B</shortName>
    </alternativeName>
</protein>
<comment type="function">
    <text evidence="1">Binds the cellulose synthase activator, bis-(3'-5') cyclic diguanylic acid (c-di-GMP).</text>
</comment>
<comment type="pathway">
    <text>Glycan metabolism; bacterial cellulose biosynthesis.</text>
</comment>
<comment type="subunit">
    <text evidence="1">Tightly associated with the cellulose synthase catalytic subunit.</text>
</comment>
<comment type="subcellular location">
    <subcellularLocation>
        <location evidence="1">Cell inner membrane</location>
        <topology evidence="1">Single-pass type I membrane protein</topology>
    </subcellularLocation>
</comment>
<comment type="similarity">
    <text evidence="4">Belongs to the AcsB/BcsB family.</text>
</comment>
<sequence length="802" mass="85306">MKMVSLIALLVFATGAQAAPVASKAPAPQPAGSDLPPLPAAPPQAAPPAAASAAPPATTPAADASAASAADAVVDNAENAIAGSDVATVHTYSLRELGAQSALKMQGAATLQGLQFGIPADQLVTSARLVVSGAMSPSLQPDTSAVTITLNEQFIGTLRPDPTHPTFGPLSFDINPIFFISGNRLNFSFASSSKGCTDPSNGLFWASVSEHSELQITTIPLPPHRQLSRLPQPFFDKNVKQKIVIPFVLAQTFDPEVLKATGILASWFGQQTDYRGVTFPVFSTIPQTGNAVVVGVADELPSALGRQAVSGPTLMEVANPSDPNGTILLVTGRDRDEVITASKGIGFGSSTLPTANRMDVAPIEVGARVANDAPSFIPTNRPVRLGELVPDSALQAEGYAPGALAVPFRVSPDLYTWRDRPNKLNVRFRAPPGPIVDVSRSSLNVGINDTYLEAYPLREPDSPLDQLLHGVGLGHRNNDSVQQHTMPIPTYRVFGQNQLLFYFEMAAMVEPGCKPGPSTFHMGIDPNSTIDLSNSYHITQMPNLAFMASAGFPFTTYADLSRSAVVLPEHPNGMIVSAYLDLMGFMGATTWYPVSGVDVVSSDHVNDVADRNLIVLSTLANSGDVSQLLSNSAYQISDGRLHMALRSTLSGVWNLFQDPMSAINSTAPTDVESTLTGGVAAMVEAESPLASGRTVLALLSGDGQGLNNLVQILAQRKNQAKIQGDLVLAHGDDLTSYRSSPLYTVGTVPLWLKPDWYMHNHPSRVVVVGLFGCLLVVAVLMRALTKHALRRRRELQEERQRT</sequence>
<accession>O82860</accession>
<reference key="1">
    <citation type="journal article" date="1998" name="Gene">
        <title>Control of expression by the cellulose synthase (bcsA) promoter region from Acetobacter xylinum BPR 2001.</title>
        <authorList>
            <person name="Nakai T."/>
            <person name="Moriya A."/>
            <person name="Tonouchi N."/>
            <person name="Tsuchida T."/>
            <person name="Yoshinaga F."/>
            <person name="Horinouchi S."/>
            <person name="Sone Y."/>
            <person name="Mori H."/>
            <person name="Sakai F."/>
            <person name="Hayashi T."/>
        </authorList>
    </citation>
    <scope>NUCLEOTIDE SEQUENCE [GENOMIC DNA]</scope>
    <source>
        <strain>ATCC 700178 / DSM 15973 / CECT 7291 / JCM 9730 / LMG 18788 / BPR 2001</strain>
    </source>
</reference>
<gene>
    <name type="primary">bcsB</name>
</gene>
<keyword id="KW-0973">c-di-GMP</keyword>
<keyword id="KW-0997">Cell inner membrane</keyword>
<keyword id="KW-1003">Cell membrane</keyword>
<keyword id="KW-0135">Cellulose biosynthesis</keyword>
<keyword id="KW-0472">Membrane</keyword>
<keyword id="KW-0732">Signal</keyword>
<keyword id="KW-0812">Transmembrane</keyword>
<keyword id="KW-1133">Transmembrane helix</keyword>
<feature type="signal peptide" evidence="2">
    <location>
        <begin position="1"/>
        <end position="18"/>
    </location>
</feature>
<feature type="chain" id="PRO_0000000266" description="Cyclic di-GMP-binding protein">
    <location>
        <begin position="19"/>
        <end position="802"/>
    </location>
</feature>
<feature type="topological domain" description="Periplasmic" evidence="2">
    <location>
        <begin position="19"/>
        <end position="764"/>
    </location>
</feature>
<feature type="transmembrane region" description="Helical" evidence="2">
    <location>
        <begin position="765"/>
        <end position="785"/>
    </location>
</feature>
<feature type="topological domain" description="Cytoplasmic" evidence="2">
    <location>
        <begin position="786"/>
        <end position="802"/>
    </location>
</feature>
<feature type="region of interest" description="Disordered" evidence="3">
    <location>
        <begin position="23"/>
        <end position="63"/>
    </location>
</feature>
<feature type="compositionally biased region" description="Low complexity" evidence="3">
    <location>
        <begin position="23"/>
        <end position="35"/>
    </location>
</feature>
<feature type="compositionally biased region" description="Pro residues" evidence="3">
    <location>
        <begin position="36"/>
        <end position="46"/>
    </location>
</feature>
<feature type="compositionally biased region" description="Low complexity" evidence="3">
    <location>
        <begin position="47"/>
        <end position="63"/>
    </location>
</feature>
<name>BCSB2_KOMSB</name>
<organism>
    <name type="scientific">Komagataeibacter sucrofermentans (strain ATCC 700178 / DSM 15973 / CECT 7291 / JCM 9730 / LMG 18788 / BPR 2001)</name>
    <name type="common">Acetobacter xylinus subsp. sucrofermentans</name>
    <dbReference type="NCBI Taxonomy" id="1307942"/>
    <lineage>
        <taxon>Bacteria</taxon>
        <taxon>Pseudomonadati</taxon>
        <taxon>Pseudomonadota</taxon>
        <taxon>Alphaproteobacteria</taxon>
        <taxon>Acetobacterales</taxon>
        <taxon>Acetobacteraceae</taxon>
        <taxon>Komagataeibacter</taxon>
    </lineage>
</organism>
<proteinExistence type="inferred from homology"/>